<comment type="function">
    <text evidence="1">Involved in the modulation of the specificity of the ClpAP-mediated ATP-dependent protein degradation.</text>
</comment>
<comment type="subunit">
    <text evidence="1">Binds to the N-terminal domain of the chaperone ClpA.</text>
</comment>
<comment type="similarity">
    <text evidence="1">Belongs to the ClpS family.</text>
</comment>
<feature type="chain" id="PRO_0000215709" description="ATP-dependent Clp protease adapter protein ClpS">
    <location>
        <begin position="1"/>
        <end position="106"/>
    </location>
</feature>
<dbReference type="EMBL" id="AE014075">
    <property type="protein sequence ID" value="AAN79490.1"/>
    <property type="molecule type" value="Genomic_DNA"/>
</dbReference>
<dbReference type="RefSeq" id="WP_000520781.1">
    <property type="nucleotide sequence ID" value="NZ_CP051263.1"/>
</dbReference>
<dbReference type="SMR" id="P0A8Q7"/>
<dbReference type="STRING" id="199310.c1018"/>
<dbReference type="GeneID" id="86863397"/>
<dbReference type="KEGG" id="ecc:c1018"/>
<dbReference type="eggNOG" id="COG2127">
    <property type="taxonomic scope" value="Bacteria"/>
</dbReference>
<dbReference type="HOGENOM" id="CLU_134358_2_1_6"/>
<dbReference type="BioCyc" id="ECOL199310:C1018-MONOMER"/>
<dbReference type="Proteomes" id="UP000001410">
    <property type="component" value="Chromosome"/>
</dbReference>
<dbReference type="GO" id="GO:0030163">
    <property type="term" value="P:protein catabolic process"/>
    <property type="evidence" value="ECO:0007669"/>
    <property type="project" value="InterPro"/>
</dbReference>
<dbReference type="GO" id="GO:0006508">
    <property type="term" value="P:proteolysis"/>
    <property type="evidence" value="ECO:0007669"/>
    <property type="project" value="UniProtKB-UniRule"/>
</dbReference>
<dbReference type="FunFam" id="3.30.1390.10:FF:000002">
    <property type="entry name" value="ATP-dependent Clp protease adapter protein ClpS"/>
    <property type="match status" value="1"/>
</dbReference>
<dbReference type="Gene3D" id="3.30.1390.10">
    <property type="match status" value="1"/>
</dbReference>
<dbReference type="HAMAP" id="MF_00302">
    <property type="entry name" value="ClpS"/>
    <property type="match status" value="1"/>
</dbReference>
<dbReference type="InterPro" id="IPR022935">
    <property type="entry name" value="ClpS"/>
</dbReference>
<dbReference type="InterPro" id="IPR003769">
    <property type="entry name" value="ClpS_core"/>
</dbReference>
<dbReference type="InterPro" id="IPR014719">
    <property type="entry name" value="Ribosomal_bL12_C/ClpS-like"/>
</dbReference>
<dbReference type="NCBIfam" id="NF000670">
    <property type="entry name" value="PRK00033.1-3"/>
    <property type="match status" value="1"/>
</dbReference>
<dbReference type="NCBIfam" id="NF000672">
    <property type="entry name" value="PRK00033.1-5"/>
    <property type="match status" value="1"/>
</dbReference>
<dbReference type="PANTHER" id="PTHR33473:SF19">
    <property type="entry name" value="ATP-DEPENDENT CLP PROTEASE ADAPTER PROTEIN CLPS"/>
    <property type="match status" value="1"/>
</dbReference>
<dbReference type="PANTHER" id="PTHR33473">
    <property type="entry name" value="ATP-DEPENDENT CLP PROTEASE ADAPTER PROTEIN CLPS1, CHLOROPLASTIC"/>
    <property type="match status" value="1"/>
</dbReference>
<dbReference type="Pfam" id="PF02617">
    <property type="entry name" value="ClpS"/>
    <property type="match status" value="1"/>
</dbReference>
<dbReference type="SUPFAM" id="SSF54736">
    <property type="entry name" value="ClpS-like"/>
    <property type="match status" value="1"/>
</dbReference>
<sequence length="106" mass="12179">MGKTNDWLDFDQLAEEKVRDALKPPSMYKVILVNDDYTPMEFVIDVLQKFFSYDVERATQLMLAVHYQGKAICGVFTAEVAETKVAMVNKYARENEHPLLCTLEKA</sequence>
<accession>P0A8Q7</accession>
<accession>P75832</accession>
<evidence type="ECO:0000255" key="1">
    <source>
        <dbReference type="HAMAP-Rule" id="MF_00302"/>
    </source>
</evidence>
<name>CLPS_ECOL6</name>
<gene>
    <name evidence="1" type="primary">clpS</name>
    <name type="ordered locus">c1018</name>
</gene>
<protein>
    <recommendedName>
        <fullName evidence="1">ATP-dependent Clp protease adapter protein ClpS</fullName>
    </recommendedName>
</protein>
<proteinExistence type="inferred from homology"/>
<keyword id="KW-1185">Reference proteome</keyword>
<organism>
    <name type="scientific">Escherichia coli O6:H1 (strain CFT073 / ATCC 700928 / UPEC)</name>
    <dbReference type="NCBI Taxonomy" id="199310"/>
    <lineage>
        <taxon>Bacteria</taxon>
        <taxon>Pseudomonadati</taxon>
        <taxon>Pseudomonadota</taxon>
        <taxon>Gammaproteobacteria</taxon>
        <taxon>Enterobacterales</taxon>
        <taxon>Enterobacteriaceae</taxon>
        <taxon>Escherichia</taxon>
    </lineage>
</organism>
<reference key="1">
    <citation type="journal article" date="2002" name="Proc. Natl. Acad. Sci. U.S.A.">
        <title>Extensive mosaic structure revealed by the complete genome sequence of uropathogenic Escherichia coli.</title>
        <authorList>
            <person name="Welch R.A."/>
            <person name="Burland V."/>
            <person name="Plunkett G. III"/>
            <person name="Redford P."/>
            <person name="Roesch P."/>
            <person name="Rasko D."/>
            <person name="Buckles E.L."/>
            <person name="Liou S.-R."/>
            <person name="Boutin A."/>
            <person name="Hackett J."/>
            <person name="Stroud D."/>
            <person name="Mayhew G.F."/>
            <person name="Rose D.J."/>
            <person name="Zhou S."/>
            <person name="Schwartz D.C."/>
            <person name="Perna N.T."/>
            <person name="Mobley H.L.T."/>
            <person name="Donnenberg M.S."/>
            <person name="Blattner F.R."/>
        </authorList>
    </citation>
    <scope>NUCLEOTIDE SEQUENCE [LARGE SCALE GENOMIC DNA]</scope>
    <source>
        <strain>CFT073 / ATCC 700928 / UPEC</strain>
    </source>
</reference>